<organism>
    <name type="scientific">Rhodopirellula baltica (strain DSM 10527 / NCIMB 13988 / SH1)</name>
    <dbReference type="NCBI Taxonomy" id="243090"/>
    <lineage>
        <taxon>Bacteria</taxon>
        <taxon>Pseudomonadati</taxon>
        <taxon>Planctomycetota</taxon>
        <taxon>Planctomycetia</taxon>
        <taxon>Pirellulales</taxon>
        <taxon>Pirellulaceae</taxon>
        <taxon>Rhodopirellula</taxon>
    </lineage>
</organism>
<sequence length="222" mass="24289">MANLPILDASGKEVGQYEIDTEQIANRVSKQLLHDVVVMYQANKRQGSHNTRTRGQVSGTNKKMYRQKGTGNARAGSKRTNVRRGGGVARTVKPRDYSYRLPKKAIKIATRMAIRSRIDDGEIVVINELKLDAPKTSQIAQILKNLGLANTTTLIATAGDDQIIYKSGRNISGVTVEPVRQLNALTLLTPKRVLFTQEALDRVKDGTFAGSTQNTNEAEAAA</sequence>
<feature type="chain" id="PRO_0000129265" description="Large ribosomal subunit protein uL4">
    <location>
        <begin position="1"/>
        <end position="222"/>
    </location>
</feature>
<feature type="region of interest" description="Disordered" evidence="2">
    <location>
        <begin position="67"/>
        <end position="87"/>
    </location>
</feature>
<accession>Q7UN19</accession>
<keyword id="KW-1185">Reference proteome</keyword>
<keyword id="KW-0687">Ribonucleoprotein</keyword>
<keyword id="KW-0689">Ribosomal protein</keyword>
<keyword id="KW-0694">RNA-binding</keyword>
<keyword id="KW-0699">rRNA-binding</keyword>
<comment type="function">
    <text evidence="1">One of the primary rRNA binding proteins, this protein initially binds near the 5'-end of the 23S rRNA. It is important during the early stages of 50S assembly. It makes multiple contacts with different domains of the 23S rRNA in the assembled 50S subunit and ribosome.</text>
</comment>
<comment type="function">
    <text evidence="1">Forms part of the polypeptide exit tunnel.</text>
</comment>
<comment type="subunit">
    <text evidence="1">Part of the 50S ribosomal subunit.</text>
</comment>
<comment type="similarity">
    <text evidence="1">Belongs to the universal ribosomal protein uL4 family.</text>
</comment>
<reference key="1">
    <citation type="journal article" date="2003" name="Proc. Natl. Acad. Sci. U.S.A.">
        <title>Complete genome sequence of the marine planctomycete Pirellula sp. strain 1.</title>
        <authorList>
            <person name="Gloeckner F.O."/>
            <person name="Kube M."/>
            <person name="Bauer M."/>
            <person name="Teeling H."/>
            <person name="Lombardot T."/>
            <person name="Ludwig W."/>
            <person name="Gade D."/>
            <person name="Beck A."/>
            <person name="Borzym K."/>
            <person name="Heitmann K."/>
            <person name="Rabus R."/>
            <person name="Schlesner H."/>
            <person name="Amann R."/>
            <person name="Reinhardt R."/>
        </authorList>
    </citation>
    <scope>NUCLEOTIDE SEQUENCE [LARGE SCALE GENOMIC DNA]</scope>
    <source>
        <strain>DSM 10527 / NCIMB 13988 / SH1</strain>
    </source>
</reference>
<dbReference type="EMBL" id="BX294146">
    <property type="protein sequence ID" value="CAD75600.1"/>
    <property type="molecule type" value="Genomic_DNA"/>
</dbReference>
<dbReference type="RefSeq" id="NP_868053.1">
    <property type="nucleotide sequence ID" value="NC_005027.1"/>
</dbReference>
<dbReference type="RefSeq" id="WP_007326797.1">
    <property type="nucleotide sequence ID" value="NC_005027.1"/>
</dbReference>
<dbReference type="SMR" id="Q7UN19"/>
<dbReference type="FunCoup" id="Q7UN19">
    <property type="interactions" value="631"/>
</dbReference>
<dbReference type="STRING" id="243090.RB7834"/>
<dbReference type="EnsemblBacteria" id="CAD75600">
    <property type="protein sequence ID" value="CAD75600"/>
    <property type="gene ID" value="RB7834"/>
</dbReference>
<dbReference type="KEGG" id="rba:RB7834"/>
<dbReference type="PATRIC" id="fig|243090.15.peg.3783"/>
<dbReference type="eggNOG" id="COG0088">
    <property type="taxonomic scope" value="Bacteria"/>
</dbReference>
<dbReference type="HOGENOM" id="CLU_041575_5_2_0"/>
<dbReference type="InParanoid" id="Q7UN19"/>
<dbReference type="OrthoDB" id="9803201at2"/>
<dbReference type="Proteomes" id="UP000001025">
    <property type="component" value="Chromosome"/>
</dbReference>
<dbReference type="GO" id="GO:1990904">
    <property type="term" value="C:ribonucleoprotein complex"/>
    <property type="evidence" value="ECO:0007669"/>
    <property type="project" value="UniProtKB-KW"/>
</dbReference>
<dbReference type="GO" id="GO:0005840">
    <property type="term" value="C:ribosome"/>
    <property type="evidence" value="ECO:0007669"/>
    <property type="project" value="UniProtKB-KW"/>
</dbReference>
<dbReference type="GO" id="GO:0019843">
    <property type="term" value="F:rRNA binding"/>
    <property type="evidence" value="ECO:0007669"/>
    <property type="project" value="UniProtKB-UniRule"/>
</dbReference>
<dbReference type="GO" id="GO:0003735">
    <property type="term" value="F:structural constituent of ribosome"/>
    <property type="evidence" value="ECO:0000318"/>
    <property type="project" value="GO_Central"/>
</dbReference>
<dbReference type="GO" id="GO:0006412">
    <property type="term" value="P:translation"/>
    <property type="evidence" value="ECO:0007669"/>
    <property type="project" value="UniProtKB-UniRule"/>
</dbReference>
<dbReference type="FunFam" id="3.40.1370.10:FF:000022">
    <property type="entry name" value="50S ribosomal protein L4"/>
    <property type="match status" value="1"/>
</dbReference>
<dbReference type="Gene3D" id="3.40.1370.10">
    <property type="match status" value="1"/>
</dbReference>
<dbReference type="HAMAP" id="MF_01328_B">
    <property type="entry name" value="Ribosomal_uL4_B"/>
    <property type="match status" value="1"/>
</dbReference>
<dbReference type="InterPro" id="IPR002136">
    <property type="entry name" value="Ribosomal_uL4"/>
</dbReference>
<dbReference type="InterPro" id="IPR013005">
    <property type="entry name" value="Ribosomal_uL4-like"/>
</dbReference>
<dbReference type="InterPro" id="IPR023574">
    <property type="entry name" value="Ribosomal_uL4_dom_sf"/>
</dbReference>
<dbReference type="NCBIfam" id="TIGR03953">
    <property type="entry name" value="rplD_bact"/>
    <property type="match status" value="1"/>
</dbReference>
<dbReference type="PANTHER" id="PTHR10746">
    <property type="entry name" value="50S RIBOSOMAL PROTEIN L4"/>
    <property type="match status" value="1"/>
</dbReference>
<dbReference type="PANTHER" id="PTHR10746:SF6">
    <property type="entry name" value="LARGE RIBOSOMAL SUBUNIT PROTEIN UL4M"/>
    <property type="match status" value="1"/>
</dbReference>
<dbReference type="Pfam" id="PF00573">
    <property type="entry name" value="Ribosomal_L4"/>
    <property type="match status" value="1"/>
</dbReference>
<dbReference type="SUPFAM" id="SSF52166">
    <property type="entry name" value="Ribosomal protein L4"/>
    <property type="match status" value="1"/>
</dbReference>
<evidence type="ECO:0000255" key="1">
    <source>
        <dbReference type="HAMAP-Rule" id="MF_01328"/>
    </source>
</evidence>
<evidence type="ECO:0000256" key="2">
    <source>
        <dbReference type="SAM" id="MobiDB-lite"/>
    </source>
</evidence>
<evidence type="ECO:0000305" key="3"/>
<gene>
    <name evidence="1" type="primary">rplD</name>
    <name type="ordered locus">RB7834</name>
</gene>
<name>RL4_RHOBA</name>
<protein>
    <recommendedName>
        <fullName evidence="1">Large ribosomal subunit protein uL4</fullName>
    </recommendedName>
    <alternativeName>
        <fullName evidence="3">50S ribosomal protein L4</fullName>
    </alternativeName>
</protein>
<proteinExistence type="inferred from homology"/>